<keyword id="KW-0143">Chaperone</keyword>
<keyword id="KW-0963">Cytoplasm</keyword>
<comment type="function">
    <text evidence="1">Together with the chaperonin GroEL, plays an essential role in assisting protein folding. The GroEL-GroES system forms a nano-cage that allows encapsulation of the non-native substrate proteins and provides a physical environment optimized to promote and accelerate protein folding. GroES binds to the apical surface of the GroEL ring, thereby capping the opening of the GroEL channel.</text>
</comment>
<comment type="subunit">
    <text evidence="1">Heptamer of 7 subunits arranged in a ring. Interacts with the chaperonin GroEL.</text>
</comment>
<comment type="subcellular location">
    <subcellularLocation>
        <location evidence="1">Cytoplasm</location>
    </subcellularLocation>
</comment>
<comment type="similarity">
    <text evidence="1 2">Belongs to the GroES chaperonin family.</text>
</comment>
<reference key="1">
    <citation type="journal article" date="1991" name="Biochem. Biophys. Res. Commun.">
        <title>Gene structure of heat shock proteins 61KDa and 12KDa (thermophilic chaperonins) of thermophilic bacterium PS3.</title>
        <authorList>
            <person name="Tamada H."/>
            <person name="Ohta T."/>
            <person name="Hamamoto T."/>
            <person name="Otawara-Hamamoto Y."/>
            <person name="Yanagi M."/>
            <person name="Hiraiwa H."/>
            <person name="Hirata H."/>
            <person name="Kagawa Y."/>
        </authorList>
    </citation>
    <scope>NUCLEOTIDE SEQUENCE [GENOMIC DNA]</scope>
</reference>
<reference key="2">
    <citation type="journal article" date="1993" name="Biochem. Biophys. Res. Commun.">
        <title>Heat shock promoter of thermophilic chaperonin operon.</title>
        <authorList>
            <person name="Ohta T."/>
            <person name="Honda K."/>
            <person name="Saito K."/>
            <person name="Hayashi H."/>
            <person name="Tano H."/>
            <person name="Hamamoto T."/>
            <person name="Kagawa Y."/>
        </authorList>
    </citation>
    <scope>NUCLEOTIDE SEQUENCE [GENOMIC DNA]</scope>
</reference>
<gene>
    <name evidence="1" type="primary">groES</name>
    <name evidence="1" type="synonym">groS</name>
</gene>
<organism>
    <name type="scientific">Bacillus sp. (strain PS3)</name>
    <dbReference type="NCBI Taxonomy" id="2334"/>
    <lineage>
        <taxon>Bacteria</taxon>
        <taxon>Bacillati</taxon>
        <taxon>Bacillota</taxon>
        <taxon>Bacilli</taxon>
        <taxon>Bacillales</taxon>
        <taxon>Bacillaceae</taxon>
        <taxon>Bacillus</taxon>
    </lineage>
</organism>
<sequence length="94" mass="10340">MLKPLGDRIVIEVVETEEKTASGIVLPDTAKEKPQEGRVVAVGAGRVLDNGQRIGRKSKVGDRVIFSKYAGTEVKYDGKEYLILRESDILAVIR</sequence>
<accession>P26210</accession>
<name>CH10_BACP3</name>
<evidence type="ECO:0000255" key="1">
    <source>
        <dbReference type="HAMAP-Rule" id="MF_00580"/>
    </source>
</evidence>
<evidence type="ECO:0000305" key="2"/>
<proteinExistence type="inferred from homology"/>
<dbReference type="EMBL" id="S57424">
    <property type="protein sequence ID" value="AAB25914.1"/>
    <property type="molecule type" value="Genomic_DNA"/>
</dbReference>
<dbReference type="SMR" id="P26210"/>
<dbReference type="GO" id="GO:0005737">
    <property type="term" value="C:cytoplasm"/>
    <property type="evidence" value="ECO:0007669"/>
    <property type="project" value="UniProtKB-SubCell"/>
</dbReference>
<dbReference type="GO" id="GO:0005524">
    <property type="term" value="F:ATP binding"/>
    <property type="evidence" value="ECO:0007669"/>
    <property type="project" value="InterPro"/>
</dbReference>
<dbReference type="GO" id="GO:0046872">
    <property type="term" value="F:metal ion binding"/>
    <property type="evidence" value="ECO:0007669"/>
    <property type="project" value="TreeGrafter"/>
</dbReference>
<dbReference type="GO" id="GO:0044183">
    <property type="term" value="F:protein folding chaperone"/>
    <property type="evidence" value="ECO:0007669"/>
    <property type="project" value="InterPro"/>
</dbReference>
<dbReference type="GO" id="GO:0051087">
    <property type="term" value="F:protein-folding chaperone binding"/>
    <property type="evidence" value="ECO:0007669"/>
    <property type="project" value="TreeGrafter"/>
</dbReference>
<dbReference type="GO" id="GO:0051082">
    <property type="term" value="F:unfolded protein binding"/>
    <property type="evidence" value="ECO:0007669"/>
    <property type="project" value="TreeGrafter"/>
</dbReference>
<dbReference type="GO" id="GO:0051085">
    <property type="term" value="P:chaperone cofactor-dependent protein refolding"/>
    <property type="evidence" value="ECO:0007669"/>
    <property type="project" value="TreeGrafter"/>
</dbReference>
<dbReference type="CDD" id="cd00320">
    <property type="entry name" value="cpn10"/>
    <property type="match status" value="1"/>
</dbReference>
<dbReference type="FunFam" id="2.30.33.40:FF:000001">
    <property type="entry name" value="10 kDa chaperonin"/>
    <property type="match status" value="1"/>
</dbReference>
<dbReference type="Gene3D" id="2.30.33.40">
    <property type="entry name" value="GroES chaperonin"/>
    <property type="match status" value="1"/>
</dbReference>
<dbReference type="HAMAP" id="MF_00580">
    <property type="entry name" value="CH10"/>
    <property type="match status" value="1"/>
</dbReference>
<dbReference type="InterPro" id="IPR020818">
    <property type="entry name" value="Chaperonin_GroES"/>
</dbReference>
<dbReference type="InterPro" id="IPR037124">
    <property type="entry name" value="Chaperonin_GroES_sf"/>
</dbReference>
<dbReference type="InterPro" id="IPR018369">
    <property type="entry name" value="Chaprnonin_Cpn10_CS"/>
</dbReference>
<dbReference type="InterPro" id="IPR011032">
    <property type="entry name" value="GroES-like_sf"/>
</dbReference>
<dbReference type="NCBIfam" id="NF001527">
    <property type="entry name" value="PRK00364.1-2"/>
    <property type="match status" value="1"/>
</dbReference>
<dbReference type="NCBIfam" id="NF001530">
    <property type="entry name" value="PRK00364.1-6"/>
    <property type="match status" value="1"/>
</dbReference>
<dbReference type="NCBIfam" id="NF001531">
    <property type="entry name" value="PRK00364.2-2"/>
    <property type="match status" value="1"/>
</dbReference>
<dbReference type="NCBIfam" id="NF001533">
    <property type="entry name" value="PRK00364.2-4"/>
    <property type="match status" value="1"/>
</dbReference>
<dbReference type="NCBIfam" id="NF001534">
    <property type="entry name" value="PRK00364.2-5"/>
    <property type="match status" value="1"/>
</dbReference>
<dbReference type="PANTHER" id="PTHR10772">
    <property type="entry name" value="10 KDA HEAT SHOCK PROTEIN"/>
    <property type="match status" value="1"/>
</dbReference>
<dbReference type="PANTHER" id="PTHR10772:SF58">
    <property type="entry name" value="CO-CHAPERONIN GROES"/>
    <property type="match status" value="1"/>
</dbReference>
<dbReference type="Pfam" id="PF00166">
    <property type="entry name" value="Cpn10"/>
    <property type="match status" value="1"/>
</dbReference>
<dbReference type="PRINTS" id="PR00297">
    <property type="entry name" value="CHAPERONIN10"/>
</dbReference>
<dbReference type="SMART" id="SM00883">
    <property type="entry name" value="Cpn10"/>
    <property type="match status" value="1"/>
</dbReference>
<dbReference type="SUPFAM" id="SSF50129">
    <property type="entry name" value="GroES-like"/>
    <property type="match status" value="1"/>
</dbReference>
<dbReference type="PROSITE" id="PS00681">
    <property type="entry name" value="CHAPERONINS_CPN10"/>
    <property type="match status" value="1"/>
</dbReference>
<feature type="chain" id="PRO_0000174695" description="Co-chaperonin GroES">
    <location>
        <begin position="1"/>
        <end position="94"/>
    </location>
</feature>
<protein>
    <recommendedName>
        <fullName evidence="1">Co-chaperonin GroES</fullName>
    </recommendedName>
    <alternativeName>
        <fullName evidence="1">10 kDa chaperonin</fullName>
    </alternativeName>
    <alternativeName>
        <fullName evidence="1">Chaperonin-10</fullName>
        <shortName evidence="1">Cpn10</shortName>
    </alternativeName>
    <alternativeName>
        <fullName>Heat shock 12 kDa protein</fullName>
    </alternativeName>
</protein>